<sequence length="129" mass="13845">MAKAPIRARKRVRKQVSDGVAHIHASFNNTIVTITDRQGNALGWATAGGSGFRGSRKSTPFAAQVAAERCADAVKEYGIKNLEVMVKGPGPGRESTIRALNAAGFRITNITDVTPIPHNGCRPPKKRRV</sequence>
<feature type="chain" id="PRO_0000294754" description="Small ribosomal subunit protein uS11">
    <location>
        <begin position="1"/>
        <end position="129"/>
    </location>
</feature>
<proteinExistence type="inferred from homology"/>
<evidence type="ECO:0000255" key="1">
    <source>
        <dbReference type="HAMAP-Rule" id="MF_01310"/>
    </source>
</evidence>
<evidence type="ECO:0000305" key="2"/>
<reference key="1">
    <citation type="journal article" date="2007" name="J. Bacteriol.">
        <title>The genome sequence of avian pathogenic Escherichia coli strain O1:K1:H7 shares strong similarities with human extraintestinal pathogenic E. coli genomes.</title>
        <authorList>
            <person name="Johnson T.J."/>
            <person name="Kariyawasam S."/>
            <person name="Wannemuehler Y."/>
            <person name="Mangiamele P."/>
            <person name="Johnson S.J."/>
            <person name="Doetkott C."/>
            <person name="Skyberg J.A."/>
            <person name="Lynne A.M."/>
            <person name="Johnson J.R."/>
            <person name="Nolan L.K."/>
        </authorList>
    </citation>
    <scope>NUCLEOTIDE SEQUENCE [LARGE SCALE GENOMIC DNA]</scope>
</reference>
<gene>
    <name evidence="1" type="primary">rpsK</name>
    <name type="ordered locus">Ecok1_32840</name>
    <name type="ORF">APECO1_3150</name>
</gene>
<dbReference type="EMBL" id="CP000468">
    <property type="protein sequence ID" value="ABJ02778.1"/>
    <property type="molecule type" value="Genomic_DNA"/>
</dbReference>
<dbReference type="RefSeq" id="WP_001029684.1">
    <property type="nucleotide sequence ID" value="NZ_CADILS010000044.1"/>
</dbReference>
<dbReference type="SMR" id="A1AGI8"/>
<dbReference type="GeneID" id="93778690"/>
<dbReference type="KEGG" id="ecv:APECO1_3150"/>
<dbReference type="HOGENOM" id="CLU_072439_5_0_6"/>
<dbReference type="Proteomes" id="UP000008216">
    <property type="component" value="Chromosome"/>
</dbReference>
<dbReference type="GO" id="GO:1990904">
    <property type="term" value="C:ribonucleoprotein complex"/>
    <property type="evidence" value="ECO:0007669"/>
    <property type="project" value="UniProtKB-KW"/>
</dbReference>
<dbReference type="GO" id="GO:0005840">
    <property type="term" value="C:ribosome"/>
    <property type="evidence" value="ECO:0007669"/>
    <property type="project" value="UniProtKB-KW"/>
</dbReference>
<dbReference type="GO" id="GO:0019843">
    <property type="term" value="F:rRNA binding"/>
    <property type="evidence" value="ECO:0007669"/>
    <property type="project" value="UniProtKB-UniRule"/>
</dbReference>
<dbReference type="GO" id="GO:0003735">
    <property type="term" value="F:structural constituent of ribosome"/>
    <property type="evidence" value="ECO:0007669"/>
    <property type="project" value="InterPro"/>
</dbReference>
<dbReference type="GO" id="GO:0006412">
    <property type="term" value="P:translation"/>
    <property type="evidence" value="ECO:0007669"/>
    <property type="project" value="UniProtKB-UniRule"/>
</dbReference>
<dbReference type="FunFam" id="3.30.420.80:FF:000001">
    <property type="entry name" value="30S ribosomal protein S11"/>
    <property type="match status" value="1"/>
</dbReference>
<dbReference type="Gene3D" id="3.30.420.80">
    <property type="entry name" value="Ribosomal protein S11"/>
    <property type="match status" value="1"/>
</dbReference>
<dbReference type="HAMAP" id="MF_01310">
    <property type="entry name" value="Ribosomal_uS11"/>
    <property type="match status" value="1"/>
</dbReference>
<dbReference type="InterPro" id="IPR001971">
    <property type="entry name" value="Ribosomal_uS11"/>
</dbReference>
<dbReference type="InterPro" id="IPR019981">
    <property type="entry name" value="Ribosomal_uS11_bac-type"/>
</dbReference>
<dbReference type="InterPro" id="IPR018102">
    <property type="entry name" value="Ribosomal_uS11_CS"/>
</dbReference>
<dbReference type="InterPro" id="IPR036967">
    <property type="entry name" value="Ribosomal_uS11_sf"/>
</dbReference>
<dbReference type="NCBIfam" id="NF003698">
    <property type="entry name" value="PRK05309.1"/>
    <property type="match status" value="1"/>
</dbReference>
<dbReference type="NCBIfam" id="TIGR03632">
    <property type="entry name" value="uS11_bact"/>
    <property type="match status" value="1"/>
</dbReference>
<dbReference type="PANTHER" id="PTHR11759">
    <property type="entry name" value="40S RIBOSOMAL PROTEIN S14/30S RIBOSOMAL PROTEIN S11"/>
    <property type="match status" value="1"/>
</dbReference>
<dbReference type="Pfam" id="PF00411">
    <property type="entry name" value="Ribosomal_S11"/>
    <property type="match status" value="1"/>
</dbReference>
<dbReference type="PIRSF" id="PIRSF002131">
    <property type="entry name" value="Ribosomal_S11"/>
    <property type="match status" value="1"/>
</dbReference>
<dbReference type="SUPFAM" id="SSF53137">
    <property type="entry name" value="Translational machinery components"/>
    <property type="match status" value="1"/>
</dbReference>
<dbReference type="PROSITE" id="PS00054">
    <property type="entry name" value="RIBOSOMAL_S11"/>
    <property type="match status" value="1"/>
</dbReference>
<name>RS11_ECOK1</name>
<protein>
    <recommendedName>
        <fullName evidence="1">Small ribosomal subunit protein uS11</fullName>
    </recommendedName>
    <alternativeName>
        <fullName evidence="2">30S ribosomal protein S11</fullName>
    </alternativeName>
</protein>
<organism>
    <name type="scientific">Escherichia coli O1:K1 / APEC</name>
    <dbReference type="NCBI Taxonomy" id="405955"/>
    <lineage>
        <taxon>Bacteria</taxon>
        <taxon>Pseudomonadati</taxon>
        <taxon>Pseudomonadota</taxon>
        <taxon>Gammaproteobacteria</taxon>
        <taxon>Enterobacterales</taxon>
        <taxon>Enterobacteriaceae</taxon>
        <taxon>Escherichia</taxon>
    </lineage>
</organism>
<keyword id="KW-1185">Reference proteome</keyword>
<keyword id="KW-0687">Ribonucleoprotein</keyword>
<keyword id="KW-0689">Ribosomal protein</keyword>
<keyword id="KW-0694">RNA-binding</keyword>
<keyword id="KW-0699">rRNA-binding</keyword>
<comment type="function">
    <text evidence="1">Located on the platform of the 30S subunit, it bridges several disparate RNA helices of the 16S rRNA. Forms part of the Shine-Dalgarno cleft in the 70S ribosome.</text>
</comment>
<comment type="subunit">
    <text evidence="1">Part of the 30S ribosomal subunit. Interacts with proteins S7 and S18. Binds to IF-3.</text>
</comment>
<comment type="similarity">
    <text evidence="1">Belongs to the universal ribosomal protein uS11 family.</text>
</comment>
<accession>A1AGI8</accession>